<evidence type="ECO:0000255" key="1">
    <source>
        <dbReference type="HAMAP-Rule" id="MF_00123"/>
    </source>
</evidence>
<organism>
    <name type="scientific">Picosynechococcus sp. (strain ATCC 27264 / PCC 7002 / PR-6)</name>
    <name type="common">Agmenellum quadruplicatum</name>
    <dbReference type="NCBI Taxonomy" id="32049"/>
    <lineage>
        <taxon>Bacteria</taxon>
        <taxon>Bacillati</taxon>
        <taxon>Cyanobacteriota</taxon>
        <taxon>Cyanophyceae</taxon>
        <taxon>Oscillatoriophycideae</taxon>
        <taxon>Chroococcales</taxon>
        <taxon>Geminocystaceae</taxon>
        <taxon>Picosynechococcus</taxon>
    </lineage>
</organism>
<name>SYR_PICP2</name>
<comment type="catalytic activity">
    <reaction evidence="1">
        <text>tRNA(Arg) + L-arginine + ATP = L-arginyl-tRNA(Arg) + AMP + diphosphate</text>
        <dbReference type="Rhea" id="RHEA:20301"/>
        <dbReference type="Rhea" id="RHEA-COMP:9658"/>
        <dbReference type="Rhea" id="RHEA-COMP:9673"/>
        <dbReference type="ChEBI" id="CHEBI:30616"/>
        <dbReference type="ChEBI" id="CHEBI:32682"/>
        <dbReference type="ChEBI" id="CHEBI:33019"/>
        <dbReference type="ChEBI" id="CHEBI:78442"/>
        <dbReference type="ChEBI" id="CHEBI:78513"/>
        <dbReference type="ChEBI" id="CHEBI:456215"/>
        <dbReference type="EC" id="6.1.1.19"/>
    </reaction>
</comment>
<comment type="subunit">
    <text evidence="1">Monomer.</text>
</comment>
<comment type="subcellular location">
    <subcellularLocation>
        <location evidence="1">Cytoplasm</location>
    </subcellularLocation>
</comment>
<comment type="similarity">
    <text evidence="1">Belongs to the class-I aminoacyl-tRNA synthetase family.</text>
</comment>
<reference key="1">
    <citation type="submission" date="2008-02" db="EMBL/GenBank/DDBJ databases">
        <title>Complete sequence of Synechococcus sp. PCC 7002.</title>
        <authorList>
            <person name="Li T."/>
            <person name="Zhao J."/>
            <person name="Zhao C."/>
            <person name="Liu Z."/>
            <person name="Zhao F."/>
            <person name="Marquardt J."/>
            <person name="Nomura C.T."/>
            <person name="Persson S."/>
            <person name="Detter J.C."/>
            <person name="Richardson P.M."/>
            <person name="Lanz C."/>
            <person name="Schuster S.C."/>
            <person name="Wang J."/>
            <person name="Li S."/>
            <person name="Huang X."/>
            <person name="Cai T."/>
            <person name="Yu Z."/>
            <person name="Luo J."/>
            <person name="Zhao J."/>
            <person name="Bryant D.A."/>
        </authorList>
    </citation>
    <scope>NUCLEOTIDE SEQUENCE [LARGE SCALE GENOMIC DNA]</scope>
    <source>
        <strain>ATCC 27264 / PCC 7002 / PR-6</strain>
    </source>
</reference>
<sequence length="585" mass="65395">MKSILSQLKTAVSEALIKAFGEDLKDTDPLVVPASNPKFGDYQSNVALSLTKILKKNPREIAQSIIEALDIADTCENPTIAGPGFINFSLKPSYLATLLKEVQQSDRLAIEPAENPQKVIVDFSSPNIAKEMHVGHLRSTIIGDSIARILEFRGQDVLRLNHVGDWGTQFGMLITYLKEVYPDALTKADALDIGDLVAFYKKAKVRFDEDEAFKEASRNQVVKLQSGDEESQKAWQLLCEQSRREFQKIYDILDIKLTERGESFYNPYLADVLTALDEVGLLEEDAGAQCVFLEGFKNKDGDRLPLIVQKSDGGFNYATTDLAAIRYRIKEDQAKRIIYVTDSGQAGHFAQVFQVAERAGFLPDDVEVVHVPFGLVQGEDGKKLKTRAGDTIKLKDLLDEAVNRSRADLEKRLAEDERQETADFIEKVSQVVGIGAVKYADLSQNRTSNYIFSFDKMLALQGNTAPYMLYAYVRVQGVSRQGGIDLSTLPTDTPIILEEAAELTLAKHLLQLSEVLMSVEQDLMPNRLCEYLYDLSRKFNQFYEACPILKAEGDRRISRLILADTTARTLKLGLSLLGIEVLDRM</sequence>
<keyword id="KW-0030">Aminoacyl-tRNA synthetase</keyword>
<keyword id="KW-0067">ATP-binding</keyword>
<keyword id="KW-0963">Cytoplasm</keyword>
<keyword id="KW-0436">Ligase</keyword>
<keyword id="KW-0547">Nucleotide-binding</keyword>
<keyword id="KW-0648">Protein biosynthesis</keyword>
<keyword id="KW-1185">Reference proteome</keyword>
<protein>
    <recommendedName>
        <fullName evidence="1">Arginine--tRNA ligase</fullName>
        <ecNumber evidence="1">6.1.1.19</ecNumber>
    </recommendedName>
    <alternativeName>
        <fullName evidence="1">Arginyl-tRNA synthetase</fullName>
        <shortName evidence="1">ArgRS</shortName>
    </alternativeName>
</protein>
<gene>
    <name evidence="1" type="primary">argS</name>
    <name type="ordered locus">SYNPCC7002_A0599</name>
</gene>
<proteinExistence type="inferred from homology"/>
<accession>B1XPX8</accession>
<dbReference type="EC" id="6.1.1.19" evidence="1"/>
<dbReference type="EMBL" id="CP000951">
    <property type="protein sequence ID" value="ACA98606.1"/>
    <property type="molecule type" value="Genomic_DNA"/>
</dbReference>
<dbReference type="RefSeq" id="WP_012306230.1">
    <property type="nucleotide sequence ID" value="NZ_JAHHPU010000001.1"/>
</dbReference>
<dbReference type="SMR" id="B1XPX8"/>
<dbReference type="STRING" id="32049.SYNPCC7002_A0599"/>
<dbReference type="KEGG" id="syp:SYNPCC7002_A0599"/>
<dbReference type="eggNOG" id="COG0018">
    <property type="taxonomic scope" value="Bacteria"/>
</dbReference>
<dbReference type="HOGENOM" id="CLU_006406_5_1_3"/>
<dbReference type="Proteomes" id="UP000001688">
    <property type="component" value="Chromosome"/>
</dbReference>
<dbReference type="GO" id="GO:0005737">
    <property type="term" value="C:cytoplasm"/>
    <property type="evidence" value="ECO:0007669"/>
    <property type="project" value="UniProtKB-SubCell"/>
</dbReference>
<dbReference type="GO" id="GO:0004814">
    <property type="term" value="F:arginine-tRNA ligase activity"/>
    <property type="evidence" value="ECO:0007669"/>
    <property type="project" value="UniProtKB-UniRule"/>
</dbReference>
<dbReference type="GO" id="GO:0005524">
    <property type="term" value="F:ATP binding"/>
    <property type="evidence" value="ECO:0007669"/>
    <property type="project" value="UniProtKB-UniRule"/>
</dbReference>
<dbReference type="GO" id="GO:0006420">
    <property type="term" value="P:arginyl-tRNA aminoacylation"/>
    <property type="evidence" value="ECO:0007669"/>
    <property type="project" value="UniProtKB-UniRule"/>
</dbReference>
<dbReference type="CDD" id="cd07956">
    <property type="entry name" value="Anticodon_Ia_Arg"/>
    <property type="match status" value="1"/>
</dbReference>
<dbReference type="CDD" id="cd00671">
    <property type="entry name" value="ArgRS_core"/>
    <property type="match status" value="1"/>
</dbReference>
<dbReference type="FunFam" id="3.40.50.620:FF:000030">
    <property type="entry name" value="Arginine--tRNA ligase"/>
    <property type="match status" value="1"/>
</dbReference>
<dbReference type="FunFam" id="1.10.730.10:FF:000006">
    <property type="entry name" value="Arginyl-tRNA synthetase 2, mitochondrial"/>
    <property type="match status" value="1"/>
</dbReference>
<dbReference type="Gene3D" id="3.30.1360.70">
    <property type="entry name" value="Arginyl tRNA synthetase N-terminal domain"/>
    <property type="match status" value="1"/>
</dbReference>
<dbReference type="Gene3D" id="3.40.50.620">
    <property type="entry name" value="HUPs"/>
    <property type="match status" value="1"/>
</dbReference>
<dbReference type="Gene3D" id="1.10.730.10">
    <property type="entry name" value="Isoleucyl-tRNA Synthetase, Domain 1"/>
    <property type="match status" value="1"/>
</dbReference>
<dbReference type="HAMAP" id="MF_00123">
    <property type="entry name" value="Arg_tRNA_synth"/>
    <property type="match status" value="1"/>
</dbReference>
<dbReference type="InterPro" id="IPR001412">
    <property type="entry name" value="aa-tRNA-synth_I_CS"/>
</dbReference>
<dbReference type="InterPro" id="IPR001278">
    <property type="entry name" value="Arg-tRNA-ligase"/>
</dbReference>
<dbReference type="InterPro" id="IPR005148">
    <property type="entry name" value="Arg-tRNA-synth_N"/>
</dbReference>
<dbReference type="InterPro" id="IPR036695">
    <property type="entry name" value="Arg-tRNA-synth_N_sf"/>
</dbReference>
<dbReference type="InterPro" id="IPR035684">
    <property type="entry name" value="ArgRS_core"/>
</dbReference>
<dbReference type="InterPro" id="IPR008909">
    <property type="entry name" value="DALR_anticod-bd"/>
</dbReference>
<dbReference type="InterPro" id="IPR014729">
    <property type="entry name" value="Rossmann-like_a/b/a_fold"/>
</dbReference>
<dbReference type="InterPro" id="IPR009080">
    <property type="entry name" value="tRNAsynth_Ia_anticodon-bd"/>
</dbReference>
<dbReference type="NCBIfam" id="TIGR00456">
    <property type="entry name" value="argS"/>
    <property type="match status" value="1"/>
</dbReference>
<dbReference type="PANTHER" id="PTHR11956:SF5">
    <property type="entry name" value="ARGININE--TRNA LIGASE, CYTOPLASMIC"/>
    <property type="match status" value="1"/>
</dbReference>
<dbReference type="PANTHER" id="PTHR11956">
    <property type="entry name" value="ARGINYL-TRNA SYNTHETASE"/>
    <property type="match status" value="1"/>
</dbReference>
<dbReference type="Pfam" id="PF03485">
    <property type="entry name" value="Arg_tRNA_synt_N"/>
    <property type="match status" value="1"/>
</dbReference>
<dbReference type="Pfam" id="PF05746">
    <property type="entry name" value="DALR_1"/>
    <property type="match status" value="1"/>
</dbReference>
<dbReference type="Pfam" id="PF00750">
    <property type="entry name" value="tRNA-synt_1d"/>
    <property type="match status" value="1"/>
</dbReference>
<dbReference type="PRINTS" id="PR01038">
    <property type="entry name" value="TRNASYNTHARG"/>
</dbReference>
<dbReference type="SMART" id="SM01016">
    <property type="entry name" value="Arg_tRNA_synt_N"/>
    <property type="match status" value="1"/>
</dbReference>
<dbReference type="SMART" id="SM00836">
    <property type="entry name" value="DALR_1"/>
    <property type="match status" value="1"/>
</dbReference>
<dbReference type="SUPFAM" id="SSF47323">
    <property type="entry name" value="Anticodon-binding domain of a subclass of class I aminoacyl-tRNA synthetases"/>
    <property type="match status" value="1"/>
</dbReference>
<dbReference type="SUPFAM" id="SSF55190">
    <property type="entry name" value="Arginyl-tRNA synthetase (ArgRS), N-terminal 'additional' domain"/>
    <property type="match status" value="1"/>
</dbReference>
<dbReference type="SUPFAM" id="SSF52374">
    <property type="entry name" value="Nucleotidylyl transferase"/>
    <property type="match status" value="1"/>
</dbReference>
<dbReference type="PROSITE" id="PS00178">
    <property type="entry name" value="AA_TRNA_LIGASE_I"/>
    <property type="match status" value="1"/>
</dbReference>
<feature type="chain" id="PRO_1000095415" description="Arginine--tRNA ligase">
    <location>
        <begin position="1"/>
        <end position="585"/>
    </location>
</feature>
<feature type="short sequence motif" description="'HIGH' region">
    <location>
        <begin position="126"/>
        <end position="136"/>
    </location>
</feature>